<comment type="function">
    <text evidence="1">A type II topoisomerase that negatively supercoils closed circular double-stranded (ds) DNA in an ATP-dependent manner to modulate DNA topology and maintain chromosomes in an underwound state. Negative supercoiling favors strand separation, and DNA replication, transcription, recombination and repair, all of which involve strand separation. Also able to catalyze the interconversion of other topological isomers of dsDNA rings, including catenanes and knotted rings. Type II topoisomerases break and join 2 DNA strands simultaneously in an ATP-dependent manner.</text>
</comment>
<comment type="catalytic activity">
    <reaction evidence="2">
        <text>ATP-dependent breakage, passage and rejoining of double-stranded DNA.</text>
        <dbReference type="EC" id="5.6.2.2"/>
    </reaction>
</comment>
<comment type="subunit">
    <text evidence="1">Heterotetramer, composed of two GyrA and two GyrB chains. In the heterotetramer, GyrA contains the active site tyrosine that forms a transient covalent intermediate with DNA, while GyrB binds cofactors and catalyzes ATP hydrolysis.</text>
</comment>
<comment type="subcellular location">
    <subcellularLocation>
        <location evidence="1">Cytoplasm</location>
    </subcellularLocation>
</comment>
<comment type="miscellaneous">
    <text evidence="1">Few gyrases are as efficient as E.coli at forming negative supercoils. Not all organisms have 2 type II topoisomerases; in organisms with a single type II topoisomerase this enzyme also has to decatenate newly replicated chromosomes.</text>
</comment>
<comment type="similarity">
    <text evidence="3">Belongs to the type II topoisomerase GyrB family.</text>
</comment>
<sequence>SHKVSGGLHGVGVSVVNALSSKLQLTIHRAGQIHEQEYQHGDPQYPLKVVGETSTTGTTVRFWPSGDTFSQTIFNVDILARRLRELSFLNAGVKIVLRDERVNFEHIYAYEGGLSEKSALDIAGLPGKLADCQEKDPALSELYLVEGDSPGGSAKQGRNRKMQAILPLKGKILNVERARFDKMISSQEVGTLITALGCGIGREEYNPDKLRYHKII</sequence>
<gene>
    <name type="primary">gyrB</name>
</gene>
<reference key="1">
    <citation type="journal article" date="1996" name="Int. J. Syst. Bacteriol.">
        <title>Phylogenetic analysis of Acinetobacter strains based on the nucleotide sequences of gyrB genes and on the amino acid sequences of their products.</title>
        <authorList>
            <person name="Yamamoto S."/>
            <person name="Harayama S."/>
        </authorList>
    </citation>
    <scope>NUCLEOTIDE SEQUENCE [GENOMIC DNA]</scope>
</reference>
<proteinExistence type="inferred from homology"/>
<dbReference type="EC" id="5.6.2.2" evidence="2"/>
<dbReference type="EMBL" id="D73441">
    <property type="protein sequence ID" value="BAA11166.1"/>
    <property type="molecule type" value="Genomic_DNA"/>
</dbReference>
<dbReference type="EMBL" id="D73426">
    <property type="protein sequence ID" value="BAA11151.1"/>
    <property type="molecule type" value="Genomic_DNA"/>
</dbReference>
<dbReference type="SMR" id="Q44278"/>
<dbReference type="GO" id="GO:0005737">
    <property type="term" value="C:cytoplasm"/>
    <property type="evidence" value="ECO:0007669"/>
    <property type="project" value="UniProtKB-SubCell"/>
</dbReference>
<dbReference type="GO" id="GO:0005524">
    <property type="term" value="F:ATP binding"/>
    <property type="evidence" value="ECO:0007669"/>
    <property type="project" value="UniProtKB-KW"/>
</dbReference>
<dbReference type="GO" id="GO:0003677">
    <property type="term" value="F:DNA binding"/>
    <property type="evidence" value="ECO:0007669"/>
    <property type="project" value="UniProtKB-KW"/>
</dbReference>
<dbReference type="GO" id="GO:0003918">
    <property type="term" value="F:DNA topoisomerase type II (double strand cut, ATP-hydrolyzing) activity"/>
    <property type="evidence" value="ECO:0007669"/>
    <property type="project" value="UniProtKB-EC"/>
</dbReference>
<dbReference type="GO" id="GO:0006265">
    <property type="term" value="P:DNA topological change"/>
    <property type="evidence" value="ECO:0007669"/>
    <property type="project" value="InterPro"/>
</dbReference>
<dbReference type="Gene3D" id="3.40.50.670">
    <property type="match status" value="1"/>
</dbReference>
<dbReference type="Gene3D" id="3.30.565.10">
    <property type="entry name" value="Histidine kinase-like ATPase, C-terminal domain"/>
    <property type="match status" value="1"/>
</dbReference>
<dbReference type="InterPro" id="IPR036890">
    <property type="entry name" value="HATPase_C_sf"/>
</dbReference>
<dbReference type="InterPro" id="IPR001241">
    <property type="entry name" value="Topo_IIA"/>
</dbReference>
<dbReference type="InterPro" id="IPR013760">
    <property type="entry name" value="Topo_IIA-like_dom_sf"/>
</dbReference>
<dbReference type="InterPro" id="IPR000565">
    <property type="entry name" value="Topo_IIA_B"/>
</dbReference>
<dbReference type="InterPro" id="IPR013759">
    <property type="entry name" value="Topo_IIA_B_C"/>
</dbReference>
<dbReference type="InterPro" id="IPR006171">
    <property type="entry name" value="TOPRIM_dom"/>
</dbReference>
<dbReference type="PANTHER" id="PTHR45866:SF1">
    <property type="entry name" value="DNA GYRASE SUBUNIT B, MITOCHONDRIAL"/>
    <property type="match status" value="1"/>
</dbReference>
<dbReference type="PANTHER" id="PTHR45866">
    <property type="entry name" value="DNA GYRASE/TOPOISOMERASE SUBUNIT B"/>
    <property type="match status" value="1"/>
</dbReference>
<dbReference type="Pfam" id="PF01751">
    <property type="entry name" value="Toprim"/>
    <property type="match status" value="1"/>
</dbReference>
<dbReference type="PRINTS" id="PR01159">
    <property type="entry name" value="DNAGYRASEB"/>
</dbReference>
<dbReference type="SMART" id="SM00433">
    <property type="entry name" value="TOP2c"/>
    <property type="match status" value="1"/>
</dbReference>
<dbReference type="SUPFAM" id="SSF55874">
    <property type="entry name" value="ATPase domain of HSP90 chaperone/DNA topoisomerase II/histidine kinase"/>
    <property type="match status" value="1"/>
</dbReference>
<dbReference type="SUPFAM" id="SSF56719">
    <property type="entry name" value="Type II DNA topoisomerase"/>
    <property type="match status" value="1"/>
</dbReference>
<dbReference type="PROSITE" id="PS50880">
    <property type="entry name" value="TOPRIM"/>
    <property type="match status" value="1"/>
</dbReference>
<protein>
    <recommendedName>
        <fullName>DNA gyrase subunit B</fullName>
        <ecNumber evidence="2">5.6.2.2</ecNumber>
    </recommendedName>
</protein>
<feature type="chain" id="PRO_0000145286" description="DNA gyrase subunit B">
    <location>
        <begin position="1" status="less than"/>
        <end position="216" status="greater than"/>
    </location>
</feature>
<feature type="domain" description="Toprim" evidence="2">
    <location>
        <begin position="140"/>
        <end position="216" status="greater than"/>
    </location>
</feature>
<feature type="site" description="Interaction with DNA" evidence="2">
    <location>
        <position position="171"/>
    </location>
</feature>
<feature type="site" description="Interaction with DNA" evidence="2">
    <location>
        <position position="174"/>
    </location>
</feature>
<feature type="non-consecutive residues" evidence="3">
    <location>
        <begin position="116"/>
        <end position="117"/>
    </location>
</feature>
<feature type="non-terminal residue">
    <location>
        <position position="1"/>
    </location>
</feature>
<feature type="non-terminal residue">
    <location>
        <position position="216"/>
    </location>
</feature>
<name>GYRB_ACIS7</name>
<accession>Q44278</accession>
<accession>Q44269</accession>
<organism>
    <name type="scientific">Acinetobacter sp. (strain ATCC 33308 / BD413 ErpE27)</name>
    <dbReference type="NCBI Taxonomy" id="68992"/>
    <lineage>
        <taxon>Bacteria</taxon>
        <taxon>Pseudomonadati</taxon>
        <taxon>Pseudomonadota</taxon>
        <taxon>Gammaproteobacteria</taxon>
        <taxon>Moraxellales</taxon>
        <taxon>Moraxellaceae</taxon>
        <taxon>Acinetobacter</taxon>
    </lineage>
</organism>
<keyword id="KW-0067">ATP-binding</keyword>
<keyword id="KW-0963">Cytoplasm</keyword>
<keyword id="KW-0238">DNA-binding</keyword>
<keyword id="KW-0413">Isomerase</keyword>
<keyword id="KW-0547">Nucleotide-binding</keyword>
<keyword id="KW-0799">Topoisomerase</keyword>
<evidence type="ECO:0000250" key="1">
    <source>
        <dbReference type="UniProtKB" id="P0AES6"/>
    </source>
</evidence>
<evidence type="ECO:0000255" key="2">
    <source>
        <dbReference type="PROSITE-ProRule" id="PRU00995"/>
    </source>
</evidence>
<evidence type="ECO:0000305" key="3"/>